<protein>
    <recommendedName>
        <fullName evidence="6">Protoporphyrinogen oxidase 1, chloroplastic</fullName>
        <ecNumber evidence="2">1.3.3.4</ecNumber>
    </recommendedName>
    <alternativeName>
        <fullName evidence="5">SO-POX1</fullName>
    </alternativeName>
</protein>
<comment type="function">
    <text evidence="2">Catalyzes the 6-electron oxidation of protoporphyrinogen-IX to form protoporphyrin-IX.</text>
</comment>
<comment type="catalytic activity">
    <reaction evidence="2">
        <text>protoporphyrinogen IX + 3 O2 = protoporphyrin IX + 3 H2O2</text>
        <dbReference type="Rhea" id="RHEA:25576"/>
        <dbReference type="ChEBI" id="CHEBI:15379"/>
        <dbReference type="ChEBI" id="CHEBI:16240"/>
        <dbReference type="ChEBI" id="CHEBI:57306"/>
        <dbReference type="ChEBI" id="CHEBI:57307"/>
        <dbReference type="EC" id="1.3.3.4"/>
    </reaction>
</comment>
<comment type="cofactor">
    <cofactor evidence="1">
        <name>FAD</name>
        <dbReference type="ChEBI" id="CHEBI:57692"/>
    </cofactor>
    <text evidence="1">Binds 1 FAD per subunit.</text>
</comment>
<comment type="pathway">
    <text evidence="6">Porphyrin-containing compound metabolism; protoporphyrin-IX biosynthesis; protoporphyrin-IX from protoporphyrinogen-IX: step 1/1.</text>
</comment>
<comment type="pathway">
    <text evidence="6">Porphyrin-containing compound metabolism; chlorophyll biosynthesis.</text>
</comment>
<comment type="subcellular location">
    <subcellularLocation>
        <location evidence="4">Plastid</location>
        <location evidence="4">Chloroplast thylakoid membrane</location>
        <topology evidence="6">Peripheral membrane protein</topology>
        <orientation evidence="4">Stromal side</orientation>
    </subcellularLocation>
    <subcellularLocation>
        <location evidence="4">Plastid</location>
        <location evidence="4">Chloroplast inner membrane</location>
        <topology evidence="6">Peripheral membrane protein</topology>
        <orientation evidence="4">Stromal side</orientation>
    </subcellularLocation>
    <text evidence="4">Preferentially associates with the stromal side of the thylakoid membrane, but also localizes on the stromal side of the inner envelope membrane.</text>
</comment>
<comment type="similarity">
    <text evidence="6">Belongs to the protoporphyrinogen/coproporphyrinogen oxidase family. Protoporphyrinogen oxidase subfamily.</text>
</comment>
<reference key="1">
    <citation type="journal article" date="2000" name="Plant Physiol.">
        <title>Molecular characterization and subcellular localization of protoporphyrinogen oxidase in spinach chloroplasts.</title>
        <authorList>
            <person name="Che F.S."/>
            <person name="Watanabe N."/>
            <person name="Iwano M."/>
            <person name="Inokuchi H."/>
            <person name="Takayama S."/>
            <person name="Yoshida S."/>
            <person name="Isogai A."/>
        </authorList>
    </citation>
    <scope>NUCLEOTIDE SEQUENCE [MRNA]</scope>
    <scope>PROTEIN SEQUENCE OF 49-68</scope>
    <scope>SUBCELLULAR LOCATION</scope>
    <source>
        <tissue>Leaf</tissue>
    </source>
</reference>
<keyword id="KW-0150">Chloroplast</keyword>
<keyword id="KW-0903">Direct protein sequencing</keyword>
<keyword id="KW-0274">FAD</keyword>
<keyword id="KW-0285">Flavoprotein</keyword>
<keyword id="KW-0350">Heme biosynthesis</keyword>
<keyword id="KW-0472">Membrane</keyword>
<keyword id="KW-0560">Oxidoreductase</keyword>
<keyword id="KW-0934">Plastid</keyword>
<keyword id="KW-1001">Plastid inner membrane</keyword>
<keyword id="KW-0627">Porphyrin biosynthesis</keyword>
<keyword id="KW-1185">Reference proteome</keyword>
<keyword id="KW-0793">Thylakoid</keyword>
<keyword id="KW-0809">Transit peptide</keyword>
<proteinExistence type="evidence at protein level"/>
<accession>Q9LRI8</accession>
<sequence length="562" mass="59929">MSAMALSSTMALSLPQSSMSLSHCRHNRITILIPSSSLRRRGGSSIRCSTISTSNSAAAANYQNKNIGTNGVDGGGGGGGVLDCVIVGGGISGLCIAQALSTKYSNLSTNFIVTEAKDRVGGNITTMEADGYLWEEGPNSFQPSDAVLTMAVDSGLKEELVLGDPNSPRFVLWNGKLRPVPSKLTDLPFFDLMSFPGKIRAGLGALGLRPSPPAHEESVEQFVRRNLGDEVFERLIEPFCSGVYAGDPSKLSMKAAFGRVWVLEQKGGSIIGGTLKTIQERKDNPKPPRDPRLPKPKGQTVGSFRKGLSMLPTAISERLGNKVKVSWTLSGIAKSSNGEYNLTYETPDGLVSVRTKSVVMTVPSYVASSLLRPLSDVAAESLSKFHYPPVAAVSLSYPKEAIRSECLIDGELKGFGQLHSRSQGVETLGTIYSSSLFPGRAPPGRTLILNYIGGDTNPGILDKTKDELAEAVDRDLRRILINPNAKAPRVLGVRVWPQAIPQFLIGHFDLLDAAKAALTDGGHKGLFLGGNYVSGVALGRCIEGAYESAAEVVDFLSQYSDK</sequence>
<dbReference type="EC" id="1.3.3.4" evidence="2"/>
<dbReference type="EMBL" id="AB029492">
    <property type="protein sequence ID" value="BAA96808.1"/>
    <property type="molecule type" value="mRNA"/>
</dbReference>
<dbReference type="SMR" id="Q9LRI8"/>
<dbReference type="KEGG" id="ag:BAA96808"/>
<dbReference type="UniPathway" id="UPA00251">
    <property type="reaction ID" value="UER00324"/>
</dbReference>
<dbReference type="UniPathway" id="UPA00668"/>
<dbReference type="Proteomes" id="UP001155700">
    <property type="component" value="Unplaced"/>
</dbReference>
<dbReference type="GO" id="GO:0009706">
    <property type="term" value="C:chloroplast inner membrane"/>
    <property type="evidence" value="ECO:0000314"/>
    <property type="project" value="UniProtKB"/>
</dbReference>
<dbReference type="GO" id="GO:0009535">
    <property type="term" value="C:chloroplast thylakoid membrane"/>
    <property type="evidence" value="ECO:0007669"/>
    <property type="project" value="UniProtKB-SubCell"/>
</dbReference>
<dbReference type="GO" id="GO:0055035">
    <property type="term" value="C:plastid thylakoid membrane"/>
    <property type="evidence" value="ECO:0000314"/>
    <property type="project" value="UniProtKB"/>
</dbReference>
<dbReference type="GO" id="GO:0004729">
    <property type="term" value="F:oxygen-dependent protoporphyrinogen oxidase activity"/>
    <property type="evidence" value="ECO:0000318"/>
    <property type="project" value="GO_Central"/>
</dbReference>
<dbReference type="GO" id="GO:0015995">
    <property type="term" value="P:chlorophyll biosynthetic process"/>
    <property type="evidence" value="ECO:0007669"/>
    <property type="project" value="UniProtKB-UniPathway"/>
</dbReference>
<dbReference type="GO" id="GO:0006782">
    <property type="term" value="P:protoporphyrinogen IX biosynthetic process"/>
    <property type="evidence" value="ECO:0007669"/>
    <property type="project" value="UniProtKB-UniPathway"/>
</dbReference>
<dbReference type="FunFam" id="1.10.3110.10:FF:000002">
    <property type="entry name" value="Protoporphyrinogen oxidase"/>
    <property type="match status" value="1"/>
</dbReference>
<dbReference type="Gene3D" id="3.50.50.60">
    <property type="entry name" value="FAD/NAD(P)-binding domain"/>
    <property type="match status" value="1"/>
</dbReference>
<dbReference type="Gene3D" id="1.10.3110.10">
    <property type="entry name" value="protoporphyrinogen ix oxidase, domain 3"/>
    <property type="match status" value="1"/>
</dbReference>
<dbReference type="Gene3D" id="3.90.660.20">
    <property type="entry name" value="Protoporphyrinogen oxidase, mitochondrial, domain 2"/>
    <property type="match status" value="1"/>
</dbReference>
<dbReference type="InterPro" id="IPR002937">
    <property type="entry name" value="Amino_oxidase"/>
</dbReference>
<dbReference type="InterPro" id="IPR036188">
    <property type="entry name" value="FAD/NAD-bd_sf"/>
</dbReference>
<dbReference type="InterPro" id="IPR004572">
    <property type="entry name" value="Protoporphyrinogen_oxidase"/>
</dbReference>
<dbReference type="InterPro" id="IPR050464">
    <property type="entry name" value="Zeta_carotene_desat/Oxidored"/>
</dbReference>
<dbReference type="NCBIfam" id="TIGR00562">
    <property type="entry name" value="proto_IX_ox"/>
    <property type="match status" value="1"/>
</dbReference>
<dbReference type="PANTHER" id="PTHR42923">
    <property type="entry name" value="PROTOPORPHYRINOGEN OXIDASE"/>
    <property type="match status" value="1"/>
</dbReference>
<dbReference type="PANTHER" id="PTHR42923:SF3">
    <property type="entry name" value="PROTOPORPHYRINOGEN OXIDASE"/>
    <property type="match status" value="1"/>
</dbReference>
<dbReference type="Pfam" id="PF01593">
    <property type="entry name" value="Amino_oxidase"/>
    <property type="match status" value="1"/>
</dbReference>
<dbReference type="SUPFAM" id="SSF54373">
    <property type="entry name" value="FAD-linked reductases, C-terminal domain"/>
    <property type="match status" value="1"/>
</dbReference>
<dbReference type="SUPFAM" id="SSF51905">
    <property type="entry name" value="FAD/NAD(P)-binding domain"/>
    <property type="match status" value="1"/>
</dbReference>
<evidence type="ECO:0000250" key="1">
    <source>
        <dbReference type="UniProtKB" id="O24164"/>
    </source>
</evidence>
<evidence type="ECO:0000250" key="2">
    <source>
        <dbReference type="UniProtKB" id="P55826"/>
    </source>
</evidence>
<evidence type="ECO:0000256" key="3">
    <source>
        <dbReference type="SAM" id="MobiDB-lite"/>
    </source>
</evidence>
<evidence type="ECO:0000269" key="4">
    <source>
    </source>
</evidence>
<evidence type="ECO:0000303" key="5">
    <source>
    </source>
</evidence>
<evidence type="ECO:0000305" key="6"/>
<organism>
    <name type="scientific">Spinacia oleracea</name>
    <name type="common">Spinach</name>
    <dbReference type="NCBI Taxonomy" id="3562"/>
    <lineage>
        <taxon>Eukaryota</taxon>
        <taxon>Viridiplantae</taxon>
        <taxon>Streptophyta</taxon>
        <taxon>Embryophyta</taxon>
        <taxon>Tracheophyta</taxon>
        <taxon>Spermatophyta</taxon>
        <taxon>Magnoliopsida</taxon>
        <taxon>eudicotyledons</taxon>
        <taxon>Gunneridae</taxon>
        <taxon>Pentapetalae</taxon>
        <taxon>Caryophyllales</taxon>
        <taxon>Chenopodiaceae</taxon>
        <taxon>Chenopodioideae</taxon>
        <taxon>Anserineae</taxon>
        <taxon>Spinacia</taxon>
    </lineage>
</organism>
<name>PPOC_SPIOL</name>
<gene>
    <name evidence="5" type="primary">POX1</name>
</gene>
<feature type="transit peptide" description="Chloroplast" evidence="4">
    <location>
        <begin position="1"/>
        <end position="48"/>
    </location>
</feature>
<feature type="chain" id="PRO_0000443726" description="Protoporphyrinogen oxidase 1, chloroplastic">
    <location>
        <begin position="49"/>
        <end position="562"/>
    </location>
</feature>
<feature type="region of interest" description="Disordered" evidence="3">
    <location>
        <begin position="274"/>
        <end position="302"/>
    </location>
</feature>
<feature type="compositionally biased region" description="Basic and acidic residues" evidence="3">
    <location>
        <begin position="278"/>
        <end position="293"/>
    </location>
</feature>
<feature type="binding site" evidence="1">
    <location>
        <begin position="88"/>
        <end position="93"/>
    </location>
    <ligand>
        <name>FAD</name>
        <dbReference type="ChEBI" id="CHEBI:57692"/>
    </ligand>
</feature>
<feature type="binding site" evidence="1">
    <location>
        <begin position="115"/>
        <end position="116"/>
    </location>
    <ligand>
        <name>FAD</name>
        <dbReference type="ChEBI" id="CHEBI:57692"/>
    </ligand>
</feature>
<feature type="binding site" evidence="1">
    <location>
        <begin position="137"/>
        <end position="140"/>
    </location>
    <ligand>
        <name>FAD</name>
        <dbReference type="ChEBI" id="CHEBI:57692"/>
    </ligand>
</feature>
<feature type="binding site" evidence="1">
    <location>
        <position position="323"/>
    </location>
    <ligand>
        <name>FAD</name>
        <dbReference type="ChEBI" id="CHEBI:57692"/>
    </ligand>
</feature>
<feature type="binding site" evidence="1">
    <location>
        <begin position="536"/>
        <end position="538"/>
    </location>
    <ligand>
        <name>FAD</name>
        <dbReference type="ChEBI" id="CHEBI:57692"/>
    </ligand>
</feature>